<reference key="1">
    <citation type="journal article" date="2014" name="Stand. Genomic Sci.">
        <title>Complete genome sequence of Burkholderia phymatum STM815(T), a broad host range and efficient nitrogen-fixing symbiont of Mimosa species.</title>
        <authorList>
            <person name="Moulin L."/>
            <person name="Klonowska A."/>
            <person name="Caroline B."/>
            <person name="Booth K."/>
            <person name="Vriezen J.A."/>
            <person name="Melkonian R."/>
            <person name="James E.K."/>
            <person name="Young J.P."/>
            <person name="Bena G."/>
            <person name="Hauser L."/>
            <person name="Land M."/>
            <person name="Kyrpides N."/>
            <person name="Bruce D."/>
            <person name="Chain P."/>
            <person name="Copeland A."/>
            <person name="Pitluck S."/>
            <person name="Woyke T."/>
            <person name="Lizotte-Waniewski M."/>
            <person name="Bristow J."/>
            <person name="Riley M."/>
        </authorList>
    </citation>
    <scope>NUCLEOTIDE SEQUENCE [LARGE SCALE GENOMIC DNA]</scope>
    <source>
        <strain>DSM 17167 / CIP 108236 / LMG 21445 / STM815</strain>
    </source>
</reference>
<name>RL25_PARP8</name>
<dbReference type="EMBL" id="CP001043">
    <property type="protein sequence ID" value="ACC69507.1"/>
    <property type="molecule type" value="Genomic_DNA"/>
</dbReference>
<dbReference type="RefSeq" id="WP_012399734.1">
    <property type="nucleotide sequence ID" value="NC_010622.1"/>
</dbReference>
<dbReference type="SMR" id="B2JCN8"/>
<dbReference type="STRING" id="391038.Bphy_0314"/>
<dbReference type="KEGG" id="bph:Bphy_0314"/>
<dbReference type="eggNOG" id="COG1825">
    <property type="taxonomic scope" value="Bacteria"/>
</dbReference>
<dbReference type="HOGENOM" id="CLU_075939_0_1_4"/>
<dbReference type="OrthoDB" id="9806411at2"/>
<dbReference type="Proteomes" id="UP000001192">
    <property type="component" value="Chromosome 1"/>
</dbReference>
<dbReference type="GO" id="GO:0022625">
    <property type="term" value="C:cytosolic large ribosomal subunit"/>
    <property type="evidence" value="ECO:0007669"/>
    <property type="project" value="TreeGrafter"/>
</dbReference>
<dbReference type="GO" id="GO:0008097">
    <property type="term" value="F:5S rRNA binding"/>
    <property type="evidence" value="ECO:0007669"/>
    <property type="project" value="InterPro"/>
</dbReference>
<dbReference type="GO" id="GO:0003735">
    <property type="term" value="F:structural constituent of ribosome"/>
    <property type="evidence" value="ECO:0007669"/>
    <property type="project" value="InterPro"/>
</dbReference>
<dbReference type="GO" id="GO:0006412">
    <property type="term" value="P:translation"/>
    <property type="evidence" value="ECO:0007669"/>
    <property type="project" value="UniProtKB-UniRule"/>
</dbReference>
<dbReference type="CDD" id="cd00495">
    <property type="entry name" value="Ribosomal_L25_TL5_CTC"/>
    <property type="match status" value="1"/>
</dbReference>
<dbReference type="Gene3D" id="2.170.120.20">
    <property type="entry name" value="Ribosomal protein L25, beta domain"/>
    <property type="match status" value="1"/>
</dbReference>
<dbReference type="Gene3D" id="2.40.240.10">
    <property type="entry name" value="Ribosomal Protein L25, Chain P"/>
    <property type="match status" value="1"/>
</dbReference>
<dbReference type="HAMAP" id="MF_01334">
    <property type="entry name" value="Ribosomal_bL25_CTC"/>
    <property type="match status" value="1"/>
</dbReference>
<dbReference type="InterPro" id="IPR020056">
    <property type="entry name" value="Rbsml_bL25/Gln-tRNA_synth_N"/>
</dbReference>
<dbReference type="InterPro" id="IPR011035">
    <property type="entry name" value="Ribosomal_bL25/Gln-tRNA_synth"/>
</dbReference>
<dbReference type="InterPro" id="IPR020057">
    <property type="entry name" value="Ribosomal_bL25_b-dom"/>
</dbReference>
<dbReference type="InterPro" id="IPR037121">
    <property type="entry name" value="Ribosomal_bL25_C"/>
</dbReference>
<dbReference type="InterPro" id="IPR001021">
    <property type="entry name" value="Ribosomal_bL25_long"/>
</dbReference>
<dbReference type="InterPro" id="IPR029751">
    <property type="entry name" value="Ribosomal_L25_dom"/>
</dbReference>
<dbReference type="InterPro" id="IPR020930">
    <property type="entry name" value="Ribosomal_uL5_bac-type"/>
</dbReference>
<dbReference type="NCBIfam" id="TIGR00731">
    <property type="entry name" value="bL25_bact_ctc"/>
    <property type="match status" value="1"/>
</dbReference>
<dbReference type="NCBIfam" id="NF004128">
    <property type="entry name" value="PRK05618.1-2"/>
    <property type="match status" value="1"/>
</dbReference>
<dbReference type="NCBIfam" id="NF004130">
    <property type="entry name" value="PRK05618.1-5"/>
    <property type="match status" value="1"/>
</dbReference>
<dbReference type="NCBIfam" id="NF004612">
    <property type="entry name" value="PRK05943.1"/>
    <property type="match status" value="1"/>
</dbReference>
<dbReference type="PANTHER" id="PTHR33284">
    <property type="entry name" value="RIBOSOMAL PROTEIN L25/GLN-TRNA SYNTHETASE, ANTI-CODON-BINDING DOMAIN-CONTAINING PROTEIN"/>
    <property type="match status" value="1"/>
</dbReference>
<dbReference type="PANTHER" id="PTHR33284:SF1">
    <property type="entry name" value="RIBOSOMAL PROTEIN L25_GLN-TRNA SYNTHETASE, ANTI-CODON-BINDING DOMAIN-CONTAINING PROTEIN"/>
    <property type="match status" value="1"/>
</dbReference>
<dbReference type="Pfam" id="PF01386">
    <property type="entry name" value="Ribosomal_L25p"/>
    <property type="match status" value="1"/>
</dbReference>
<dbReference type="Pfam" id="PF14693">
    <property type="entry name" value="Ribosomal_TL5_C"/>
    <property type="match status" value="1"/>
</dbReference>
<dbReference type="SUPFAM" id="SSF50715">
    <property type="entry name" value="Ribosomal protein L25-like"/>
    <property type="match status" value="1"/>
</dbReference>
<sequence length="203" mass="21907">MKVVAFERNLQGTGASRRLRNSGKAPGIVYGAGEPQLIELDHNALWHALKKEAFHSSILELEVAGKSQQVLLRDVQYHPFRQLVLHVDFQRVDAKKKLHTKVPLHFMNQETNPAVKLGGAIISHVINEIEIECLPAALPEFIEVDLAKIEAGQSLHATDIALPAGVALVAHLVAENPVIVSAPIPAGAQSEEAAAEGEKPAAE</sequence>
<feature type="chain" id="PRO_1000142498" description="Large ribosomal subunit protein bL25">
    <location>
        <begin position="1"/>
        <end position="203"/>
    </location>
</feature>
<evidence type="ECO:0000255" key="1">
    <source>
        <dbReference type="HAMAP-Rule" id="MF_01334"/>
    </source>
</evidence>
<evidence type="ECO:0000305" key="2"/>
<comment type="function">
    <text evidence="1">This is one of the proteins that binds to the 5S RNA in the ribosome where it forms part of the central protuberance.</text>
</comment>
<comment type="subunit">
    <text evidence="1">Part of the 50S ribosomal subunit; part of the 5S rRNA/L5/L18/L25 subcomplex. Contacts the 5S rRNA. Binds to the 5S rRNA independently of L5 and L18.</text>
</comment>
<comment type="similarity">
    <text evidence="1">Belongs to the bacterial ribosomal protein bL25 family. CTC subfamily.</text>
</comment>
<accession>B2JCN8</accession>
<gene>
    <name evidence="1" type="primary">rplY</name>
    <name evidence="1" type="synonym">ctc</name>
    <name type="ordered locus">Bphy_0314</name>
</gene>
<organism>
    <name type="scientific">Paraburkholderia phymatum (strain DSM 17167 / CIP 108236 / LMG 21445 / STM815)</name>
    <name type="common">Burkholderia phymatum</name>
    <dbReference type="NCBI Taxonomy" id="391038"/>
    <lineage>
        <taxon>Bacteria</taxon>
        <taxon>Pseudomonadati</taxon>
        <taxon>Pseudomonadota</taxon>
        <taxon>Betaproteobacteria</taxon>
        <taxon>Burkholderiales</taxon>
        <taxon>Burkholderiaceae</taxon>
        <taxon>Paraburkholderia</taxon>
    </lineage>
</organism>
<proteinExistence type="inferred from homology"/>
<protein>
    <recommendedName>
        <fullName evidence="1">Large ribosomal subunit protein bL25</fullName>
    </recommendedName>
    <alternativeName>
        <fullName evidence="2">50S ribosomal protein L25</fullName>
    </alternativeName>
    <alternativeName>
        <fullName evidence="1">General stress protein CTC</fullName>
    </alternativeName>
</protein>
<keyword id="KW-1185">Reference proteome</keyword>
<keyword id="KW-0687">Ribonucleoprotein</keyword>
<keyword id="KW-0689">Ribosomal protein</keyword>
<keyword id="KW-0694">RNA-binding</keyword>
<keyword id="KW-0699">rRNA-binding</keyword>